<dbReference type="EC" id="2.1.1.177" evidence="1"/>
<dbReference type="EMBL" id="CP000090">
    <property type="protein sequence ID" value="AAZ61888.1"/>
    <property type="molecule type" value="Genomic_DNA"/>
</dbReference>
<dbReference type="SMR" id="Q46Y95"/>
<dbReference type="STRING" id="264198.Reut_A2527"/>
<dbReference type="KEGG" id="reu:Reut_A2527"/>
<dbReference type="eggNOG" id="COG1576">
    <property type="taxonomic scope" value="Bacteria"/>
</dbReference>
<dbReference type="HOGENOM" id="CLU_100552_1_0_4"/>
<dbReference type="OrthoDB" id="9806643at2"/>
<dbReference type="GO" id="GO:0005737">
    <property type="term" value="C:cytoplasm"/>
    <property type="evidence" value="ECO:0007669"/>
    <property type="project" value="UniProtKB-SubCell"/>
</dbReference>
<dbReference type="GO" id="GO:0070038">
    <property type="term" value="F:rRNA (pseudouridine-N3-)-methyltransferase activity"/>
    <property type="evidence" value="ECO:0007669"/>
    <property type="project" value="UniProtKB-UniRule"/>
</dbReference>
<dbReference type="CDD" id="cd18081">
    <property type="entry name" value="RlmH-like"/>
    <property type="match status" value="1"/>
</dbReference>
<dbReference type="Gene3D" id="3.40.1280.10">
    <property type="match status" value="1"/>
</dbReference>
<dbReference type="HAMAP" id="MF_00658">
    <property type="entry name" value="23SrRNA_methyltr_H"/>
    <property type="match status" value="1"/>
</dbReference>
<dbReference type="InterPro" id="IPR029028">
    <property type="entry name" value="Alpha/beta_knot_MTases"/>
</dbReference>
<dbReference type="InterPro" id="IPR003742">
    <property type="entry name" value="RlmH-like"/>
</dbReference>
<dbReference type="InterPro" id="IPR029026">
    <property type="entry name" value="tRNA_m1G_MTases_N"/>
</dbReference>
<dbReference type="NCBIfam" id="NF000986">
    <property type="entry name" value="PRK00103.1-4"/>
    <property type="match status" value="1"/>
</dbReference>
<dbReference type="NCBIfam" id="TIGR00246">
    <property type="entry name" value="tRNA_RlmH_YbeA"/>
    <property type="match status" value="1"/>
</dbReference>
<dbReference type="PANTHER" id="PTHR33603">
    <property type="entry name" value="METHYLTRANSFERASE"/>
    <property type="match status" value="1"/>
</dbReference>
<dbReference type="PANTHER" id="PTHR33603:SF1">
    <property type="entry name" value="RIBOSOMAL RNA LARGE SUBUNIT METHYLTRANSFERASE H"/>
    <property type="match status" value="1"/>
</dbReference>
<dbReference type="Pfam" id="PF02590">
    <property type="entry name" value="SPOUT_MTase"/>
    <property type="match status" value="1"/>
</dbReference>
<dbReference type="PIRSF" id="PIRSF004505">
    <property type="entry name" value="MT_bac"/>
    <property type="match status" value="1"/>
</dbReference>
<dbReference type="SUPFAM" id="SSF75217">
    <property type="entry name" value="alpha/beta knot"/>
    <property type="match status" value="1"/>
</dbReference>
<reference key="1">
    <citation type="journal article" date="2010" name="PLoS ONE">
        <title>The complete multipartite genome sequence of Cupriavidus necator JMP134, a versatile pollutant degrader.</title>
        <authorList>
            <person name="Lykidis A."/>
            <person name="Perez-Pantoja D."/>
            <person name="Ledger T."/>
            <person name="Mavromatis K."/>
            <person name="Anderson I.J."/>
            <person name="Ivanova N.N."/>
            <person name="Hooper S.D."/>
            <person name="Lapidus A."/>
            <person name="Lucas S."/>
            <person name="Gonzalez B."/>
            <person name="Kyrpides N.C."/>
        </authorList>
    </citation>
    <scope>NUCLEOTIDE SEQUENCE [LARGE SCALE GENOMIC DNA]</scope>
    <source>
        <strain>JMP134 / LMG 1197</strain>
    </source>
</reference>
<comment type="function">
    <text evidence="1">Specifically methylates the pseudouridine at position 1915 (m3Psi1915) in 23S rRNA.</text>
</comment>
<comment type="catalytic activity">
    <reaction evidence="1">
        <text>pseudouridine(1915) in 23S rRNA + S-adenosyl-L-methionine = N(3)-methylpseudouridine(1915) in 23S rRNA + S-adenosyl-L-homocysteine + H(+)</text>
        <dbReference type="Rhea" id="RHEA:42752"/>
        <dbReference type="Rhea" id="RHEA-COMP:10221"/>
        <dbReference type="Rhea" id="RHEA-COMP:10222"/>
        <dbReference type="ChEBI" id="CHEBI:15378"/>
        <dbReference type="ChEBI" id="CHEBI:57856"/>
        <dbReference type="ChEBI" id="CHEBI:59789"/>
        <dbReference type="ChEBI" id="CHEBI:65314"/>
        <dbReference type="ChEBI" id="CHEBI:74486"/>
        <dbReference type="EC" id="2.1.1.177"/>
    </reaction>
</comment>
<comment type="subunit">
    <text evidence="1">Homodimer.</text>
</comment>
<comment type="subcellular location">
    <subcellularLocation>
        <location evidence="1">Cytoplasm</location>
    </subcellularLocation>
</comment>
<comment type="similarity">
    <text evidence="1">Belongs to the RNA methyltransferase RlmH family.</text>
</comment>
<organism>
    <name type="scientific">Cupriavidus pinatubonensis (strain JMP 134 / LMG 1197)</name>
    <name type="common">Cupriavidus necator (strain JMP 134)</name>
    <dbReference type="NCBI Taxonomy" id="264198"/>
    <lineage>
        <taxon>Bacteria</taxon>
        <taxon>Pseudomonadati</taxon>
        <taxon>Pseudomonadota</taxon>
        <taxon>Betaproteobacteria</taxon>
        <taxon>Burkholderiales</taxon>
        <taxon>Burkholderiaceae</taxon>
        <taxon>Cupriavidus</taxon>
    </lineage>
</organism>
<name>RLMH_CUPPJ</name>
<protein>
    <recommendedName>
        <fullName evidence="1">Ribosomal RNA large subunit methyltransferase H</fullName>
        <ecNumber evidence="1">2.1.1.177</ecNumber>
    </recommendedName>
    <alternativeName>
        <fullName evidence="1">23S rRNA (pseudouridine1915-N3)-methyltransferase</fullName>
    </alternativeName>
    <alternativeName>
        <fullName evidence="1">23S rRNA m3Psi1915 methyltransferase</fullName>
    </alternativeName>
    <alternativeName>
        <fullName evidence="1">rRNA (pseudouridine-N3-)-methyltransferase RlmH</fullName>
    </alternativeName>
</protein>
<feature type="chain" id="PRO_0000260591" description="Ribosomal RNA large subunit methyltransferase H">
    <location>
        <begin position="1"/>
        <end position="159"/>
    </location>
</feature>
<feature type="binding site" evidence="1">
    <location>
        <position position="76"/>
    </location>
    <ligand>
        <name>S-adenosyl-L-methionine</name>
        <dbReference type="ChEBI" id="CHEBI:59789"/>
    </ligand>
</feature>
<feature type="binding site" evidence="1">
    <location>
        <position position="107"/>
    </location>
    <ligand>
        <name>S-adenosyl-L-methionine</name>
        <dbReference type="ChEBI" id="CHEBI:59789"/>
    </ligand>
</feature>
<feature type="binding site" evidence="1">
    <location>
        <begin position="126"/>
        <end position="131"/>
    </location>
    <ligand>
        <name>S-adenosyl-L-methionine</name>
        <dbReference type="ChEBI" id="CHEBI:59789"/>
    </ligand>
</feature>
<proteinExistence type="inferred from homology"/>
<gene>
    <name evidence="1" type="primary">rlmH</name>
    <name type="ordered locus">Reut_A2527</name>
</gene>
<sequence length="159" mass="17731">MQLVIVAVGHKMPGWIETGFNEYAKRMPPELRIELREVKPETRSSSNNAATVMQREAARIDAVLGSLSRQCRIVALDERGRDFTTVQLAGQLTDWQREGGDVAFLIGGADGLDPALKARAQTLLRLSSLTLPHGMVRVLLAEQLYRAWSVTQNHPYHRA</sequence>
<accession>Q46Y95</accession>
<keyword id="KW-0963">Cytoplasm</keyword>
<keyword id="KW-0489">Methyltransferase</keyword>
<keyword id="KW-0698">rRNA processing</keyword>
<keyword id="KW-0949">S-adenosyl-L-methionine</keyword>
<keyword id="KW-0808">Transferase</keyword>
<evidence type="ECO:0000255" key="1">
    <source>
        <dbReference type="HAMAP-Rule" id="MF_00658"/>
    </source>
</evidence>